<protein>
    <recommendedName>
        <fullName evidence="1">Glycine--tRNA ligase beta subunit</fullName>
        <ecNumber evidence="1">6.1.1.14</ecNumber>
    </recommendedName>
    <alternativeName>
        <fullName evidence="1">Glycyl-tRNA synthetase beta subunit</fullName>
        <shortName evidence="1">GlyRS</shortName>
    </alternativeName>
</protein>
<evidence type="ECO:0000255" key="1">
    <source>
        <dbReference type="HAMAP-Rule" id="MF_00255"/>
    </source>
</evidence>
<keyword id="KW-0030">Aminoacyl-tRNA synthetase</keyword>
<keyword id="KW-0067">ATP-binding</keyword>
<keyword id="KW-0963">Cytoplasm</keyword>
<keyword id="KW-0436">Ligase</keyword>
<keyword id="KW-0547">Nucleotide-binding</keyword>
<keyword id="KW-0648">Protein biosynthesis</keyword>
<dbReference type="EC" id="6.1.1.14" evidence="1"/>
<dbReference type="EMBL" id="CP001252">
    <property type="protein sequence ID" value="ACK44556.1"/>
    <property type="molecule type" value="Genomic_DNA"/>
</dbReference>
<dbReference type="RefSeq" id="WP_012586336.1">
    <property type="nucleotide sequence ID" value="NC_011663.1"/>
</dbReference>
<dbReference type="SMR" id="B8E3Q5"/>
<dbReference type="KEGG" id="sbp:Sbal223_0012"/>
<dbReference type="HOGENOM" id="CLU_007220_2_2_6"/>
<dbReference type="Proteomes" id="UP000002507">
    <property type="component" value="Chromosome"/>
</dbReference>
<dbReference type="GO" id="GO:0005829">
    <property type="term" value="C:cytosol"/>
    <property type="evidence" value="ECO:0007669"/>
    <property type="project" value="TreeGrafter"/>
</dbReference>
<dbReference type="GO" id="GO:0004814">
    <property type="term" value="F:arginine-tRNA ligase activity"/>
    <property type="evidence" value="ECO:0007669"/>
    <property type="project" value="InterPro"/>
</dbReference>
<dbReference type="GO" id="GO:0005524">
    <property type="term" value="F:ATP binding"/>
    <property type="evidence" value="ECO:0007669"/>
    <property type="project" value="UniProtKB-UniRule"/>
</dbReference>
<dbReference type="GO" id="GO:0004820">
    <property type="term" value="F:glycine-tRNA ligase activity"/>
    <property type="evidence" value="ECO:0007669"/>
    <property type="project" value="UniProtKB-UniRule"/>
</dbReference>
<dbReference type="GO" id="GO:0006420">
    <property type="term" value="P:arginyl-tRNA aminoacylation"/>
    <property type="evidence" value="ECO:0007669"/>
    <property type="project" value="InterPro"/>
</dbReference>
<dbReference type="GO" id="GO:0006426">
    <property type="term" value="P:glycyl-tRNA aminoacylation"/>
    <property type="evidence" value="ECO:0007669"/>
    <property type="project" value="UniProtKB-UniRule"/>
</dbReference>
<dbReference type="Gene3D" id="1.10.730.10">
    <property type="entry name" value="Isoleucyl-tRNA Synthetase, Domain 1"/>
    <property type="match status" value="1"/>
</dbReference>
<dbReference type="HAMAP" id="MF_00255">
    <property type="entry name" value="Gly_tRNA_synth_beta"/>
    <property type="match status" value="1"/>
</dbReference>
<dbReference type="InterPro" id="IPR008909">
    <property type="entry name" value="DALR_anticod-bd"/>
</dbReference>
<dbReference type="InterPro" id="IPR015944">
    <property type="entry name" value="Gly-tRNA-synth_bsu"/>
</dbReference>
<dbReference type="InterPro" id="IPR006194">
    <property type="entry name" value="Gly-tRNA-synth_heterodimer"/>
</dbReference>
<dbReference type="NCBIfam" id="TIGR00211">
    <property type="entry name" value="glyS"/>
    <property type="match status" value="1"/>
</dbReference>
<dbReference type="PANTHER" id="PTHR30075:SF2">
    <property type="entry name" value="GLYCINE--TRNA LIGASE, CHLOROPLASTIC_MITOCHONDRIAL 2"/>
    <property type="match status" value="1"/>
</dbReference>
<dbReference type="PANTHER" id="PTHR30075">
    <property type="entry name" value="GLYCYL-TRNA SYNTHETASE"/>
    <property type="match status" value="1"/>
</dbReference>
<dbReference type="Pfam" id="PF05746">
    <property type="entry name" value="DALR_1"/>
    <property type="match status" value="1"/>
</dbReference>
<dbReference type="Pfam" id="PF02092">
    <property type="entry name" value="tRNA_synt_2f"/>
    <property type="match status" value="1"/>
</dbReference>
<dbReference type="PRINTS" id="PR01045">
    <property type="entry name" value="TRNASYNTHGB"/>
</dbReference>
<dbReference type="SMART" id="SM00836">
    <property type="entry name" value="DALR_1"/>
    <property type="match status" value="1"/>
</dbReference>
<dbReference type="SUPFAM" id="SSF109604">
    <property type="entry name" value="HD-domain/PDEase-like"/>
    <property type="match status" value="1"/>
</dbReference>
<dbReference type="PROSITE" id="PS50861">
    <property type="entry name" value="AA_TRNA_LIGASE_II_GLYAB"/>
    <property type="match status" value="1"/>
</dbReference>
<feature type="chain" id="PRO_1000197214" description="Glycine--tRNA ligase beta subunit">
    <location>
        <begin position="1"/>
        <end position="689"/>
    </location>
</feature>
<organism>
    <name type="scientific">Shewanella baltica (strain OS223)</name>
    <dbReference type="NCBI Taxonomy" id="407976"/>
    <lineage>
        <taxon>Bacteria</taxon>
        <taxon>Pseudomonadati</taxon>
        <taxon>Pseudomonadota</taxon>
        <taxon>Gammaproteobacteria</taxon>
        <taxon>Alteromonadales</taxon>
        <taxon>Shewanellaceae</taxon>
        <taxon>Shewanella</taxon>
    </lineage>
</organism>
<proteinExistence type="inferred from homology"/>
<reference key="1">
    <citation type="submission" date="2008-12" db="EMBL/GenBank/DDBJ databases">
        <title>Complete sequence of chromosome of Shewanella baltica OS223.</title>
        <authorList>
            <consortium name="US DOE Joint Genome Institute"/>
            <person name="Lucas S."/>
            <person name="Copeland A."/>
            <person name="Lapidus A."/>
            <person name="Glavina del Rio T."/>
            <person name="Dalin E."/>
            <person name="Tice H."/>
            <person name="Bruce D."/>
            <person name="Goodwin L."/>
            <person name="Pitluck S."/>
            <person name="Chertkov O."/>
            <person name="Meincke L."/>
            <person name="Brettin T."/>
            <person name="Detter J.C."/>
            <person name="Han C."/>
            <person name="Kuske C.R."/>
            <person name="Larimer F."/>
            <person name="Land M."/>
            <person name="Hauser L."/>
            <person name="Kyrpides N."/>
            <person name="Ovchinnikova G."/>
            <person name="Brettar I."/>
            <person name="Rodrigues J."/>
            <person name="Konstantinidis K."/>
            <person name="Tiedje J."/>
        </authorList>
    </citation>
    <scope>NUCLEOTIDE SEQUENCE [LARGE SCALE GENOMIC DNA]</scope>
    <source>
        <strain>OS223</strain>
    </source>
</reference>
<gene>
    <name evidence="1" type="primary">glyS</name>
    <name type="ordered locus">Sbal223_0012</name>
</gene>
<comment type="catalytic activity">
    <reaction evidence="1">
        <text>tRNA(Gly) + glycine + ATP = glycyl-tRNA(Gly) + AMP + diphosphate</text>
        <dbReference type="Rhea" id="RHEA:16013"/>
        <dbReference type="Rhea" id="RHEA-COMP:9664"/>
        <dbReference type="Rhea" id="RHEA-COMP:9683"/>
        <dbReference type="ChEBI" id="CHEBI:30616"/>
        <dbReference type="ChEBI" id="CHEBI:33019"/>
        <dbReference type="ChEBI" id="CHEBI:57305"/>
        <dbReference type="ChEBI" id="CHEBI:78442"/>
        <dbReference type="ChEBI" id="CHEBI:78522"/>
        <dbReference type="ChEBI" id="CHEBI:456215"/>
        <dbReference type="EC" id="6.1.1.14"/>
    </reaction>
</comment>
<comment type="subunit">
    <text evidence="1">Tetramer of two alpha and two beta subunits.</text>
</comment>
<comment type="subcellular location">
    <subcellularLocation>
        <location evidence="1">Cytoplasm</location>
    </subcellularLocation>
</comment>
<comment type="similarity">
    <text evidence="1">Belongs to the class-II aminoacyl-tRNA synthetase family.</text>
</comment>
<name>SYGB_SHEB2</name>
<sequence>MNFENLLIELGTEELPPKSLRKLAESFLANFTEELSKADLAFSSAVWYAAPRRLAINVTELALAQADKVVEKRGPAVSSAFDAEGKPTKAAEGWARGNGITVEQAERLVTDKGEWLVHNAKVEGVETKSLIAAMAQRALDKLPIPKPMRWGNNKTQFIRPVHTATMLLGSELIEGELLGIKSARTVRGHRFMGLKQFELAHADHYLADLKEKGKVIADYESRKALIKADAEKAAAKIGGTADIEDSLLEEVASLVEWPVVLTASFEEKFLAVPSEALVYTMKGDQKYFPVFDDAGKLLPNFIFVTNIESKDPAQIISGNEKVVRPRLADAEFFFNTDKKHTLESRLPSLETVLFQQQLGTLKDKVNRISALAAFIAEQTGANAVDAARAGLLSKTDLMTNMVMEFTDTQGTMGMHYARLDGETEAVAVAMEEQYKPKFSGDTVPSAGVSCAVALADKLDTLVGIFGIGQAPKGAADPFALRRAAIGVLRIIVENKLPLDLVDLIAKAQALHGTNLSNANASDEVLEFLMARFRAWYQDKGIGVDVILAVLARRPTRPADFDSRINAVSHFRSLEASSALAAANKRVSNILAKVEGALPTTINASLLTEAAEQALAAKLNELQPLLAPLFANADYQQALTLLAGLRESVDQFFEDVMVMADDEALKNNRLALLNNLREQFLHVADISLLQ</sequence>
<accession>B8E3Q5</accession>